<gene>
    <name evidence="2" type="primary">PA</name>
</gene>
<comment type="function">
    <text evidence="2">Plays an essential role in viral RNA transcription and replication by forming the heterotrimeric polymerase complex together with PB1 and PB2 subunits. The complex transcribes viral mRNAs by using a unique mechanism called cap-snatching. It consists in the hijacking and cleavage of host capped pre-mRNAs. These short capped RNAs are then used as primers for viral mRNAs. The PB2 subunit is responsible for the binding of the 5' cap of cellular pre-mRNAs which are subsequently cleaved after 10-13 nucleotides by the PA subunit that carries the endonuclease activity.</text>
</comment>
<comment type="cofactor">
    <cofactor evidence="2">
        <name>Mn(2+)</name>
        <dbReference type="ChEBI" id="CHEBI:29035"/>
    </cofactor>
    <text evidence="2">Binds 2 manganese ions per subunit.</text>
</comment>
<comment type="subunit">
    <text evidence="1 2">Influenza RNA polymerase is composed of three subunits: PB1, PB2 and PA. Interacts (via C-terminus) with PB1 (via N-terminus).</text>
</comment>
<comment type="subcellular location">
    <subcellularLocation>
        <location evidence="2">Host cytoplasm</location>
    </subcellularLocation>
    <subcellularLocation>
        <location evidence="2">Host nucleus</location>
    </subcellularLocation>
    <text evidence="1 2">PB1 and PA are transported in the host nucleus as a complex.</text>
</comment>
<comment type="alternative products">
    <event type="ribosomal frameshifting"/>
    <isoform>
        <id>O89750-1</id>
        <name>PA</name>
        <sequence type="displayed"/>
    </isoform>
    <isoform>
        <id>P0CK70-1</id>
        <name>PA-X</name>
        <sequence type="external"/>
    </isoform>
</comment>
<comment type="PTM">
    <text evidence="1 2">Phosphorylated on serines and threonines by host kinases, including human casein kinase II.</text>
</comment>
<comment type="similarity">
    <text evidence="2">Belongs to the influenza viruses PA family.</text>
</comment>
<reference key="1">
    <citation type="journal article" date="1998" name="J. Virol.">
        <title>Comparisons of highly virulent H5N1 influenza A viruses isolated from humans and chickens from Hong Kong.</title>
        <authorList>
            <person name="Suarez D.L."/>
            <person name="Perdue M.L."/>
            <person name="Cox N."/>
            <person name="Rowe T."/>
            <person name="Bender C."/>
            <person name="Huang J."/>
            <person name="Swayne D.E."/>
        </authorList>
    </citation>
    <scope>NUCLEOTIDE SEQUENCE [GENOMIC RNA]</scope>
</reference>
<name>PA_I97A0</name>
<feature type="chain" id="PRO_0000279239" description="Polymerase acidic protein">
    <location>
        <begin position="1"/>
        <end position="716"/>
    </location>
</feature>
<feature type="short sequence motif" description="Nuclear localization signal 1 (NLS1)" evidence="1 2">
    <location>
        <begin position="124"/>
        <end position="139"/>
    </location>
</feature>
<feature type="short sequence motif" description="Nuclear localization signal 2 (NLS2)" evidence="1 2">
    <location>
        <begin position="184"/>
        <end position="247"/>
    </location>
</feature>
<feature type="binding site" evidence="2">
    <location>
        <position position="41"/>
    </location>
    <ligand>
        <name>Mn(2+)</name>
        <dbReference type="ChEBI" id="CHEBI:29035"/>
        <label>1</label>
    </ligand>
</feature>
<feature type="binding site" evidence="2">
    <location>
        <position position="80"/>
    </location>
    <ligand>
        <name>Mn(2+)</name>
        <dbReference type="ChEBI" id="CHEBI:29035"/>
        <label>2</label>
    </ligand>
</feature>
<feature type="binding site" evidence="2">
    <location>
        <position position="108"/>
    </location>
    <ligand>
        <name>Mn(2+)</name>
        <dbReference type="ChEBI" id="CHEBI:29035"/>
        <label>1</label>
    </ligand>
</feature>
<feature type="binding site" evidence="2">
    <location>
        <position position="108"/>
    </location>
    <ligand>
        <name>Mn(2+)</name>
        <dbReference type="ChEBI" id="CHEBI:29035"/>
        <label>2</label>
    </ligand>
</feature>
<feature type="binding site" evidence="2">
    <location>
        <position position="119"/>
    </location>
    <ligand>
        <name>Mn(2+)</name>
        <dbReference type="ChEBI" id="CHEBI:29035"/>
        <label>1</label>
    </ligand>
</feature>
<feature type="binding site" evidence="2">
    <location>
        <position position="120"/>
    </location>
    <ligand>
        <name>Mn(2+)</name>
        <dbReference type="ChEBI" id="CHEBI:29035"/>
        <label>1</label>
    </ligand>
</feature>
<evidence type="ECO:0000250" key="1">
    <source>
        <dbReference type="UniProtKB" id="P03433"/>
    </source>
</evidence>
<evidence type="ECO:0000255" key="2">
    <source>
        <dbReference type="HAMAP-Rule" id="MF_04063"/>
    </source>
</evidence>
<organismHost>
    <name type="scientific">Aves</name>
    <dbReference type="NCBI Taxonomy" id="8782"/>
</organismHost>
<organismHost>
    <name type="scientific">Felis catus</name>
    <name type="common">Cat</name>
    <name type="synonym">Felis silvestris catus</name>
    <dbReference type="NCBI Taxonomy" id="9685"/>
</organismHost>
<organismHost>
    <name type="scientific">Homo sapiens</name>
    <name type="common">Human</name>
    <dbReference type="NCBI Taxonomy" id="9606"/>
</organismHost>
<organismHost>
    <name type="scientific">Panthera pardus</name>
    <name type="common">Leopard</name>
    <name type="synonym">Felis pardus</name>
    <dbReference type="NCBI Taxonomy" id="9691"/>
</organismHost>
<organismHost>
    <name type="scientific">Panthera tigris</name>
    <name type="common">Tiger</name>
    <dbReference type="NCBI Taxonomy" id="9694"/>
</organismHost>
<organismHost>
    <name type="scientific">Sus scrofa</name>
    <name type="common">Pig</name>
    <dbReference type="NCBI Taxonomy" id="9823"/>
</organismHost>
<organism>
    <name type="scientific">Influenza A virus (strain A/Chicken/Hong Kong/220/1997 H5N1 genotype Gs/Gd)</name>
    <dbReference type="NCBI Taxonomy" id="100834"/>
    <lineage>
        <taxon>Viruses</taxon>
        <taxon>Riboviria</taxon>
        <taxon>Orthornavirae</taxon>
        <taxon>Negarnaviricota</taxon>
        <taxon>Polyploviricotina</taxon>
        <taxon>Insthoviricetes</taxon>
        <taxon>Articulavirales</taxon>
        <taxon>Orthomyxoviridae</taxon>
        <taxon>Alphainfluenzavirus</taxon>
        <taxon>Alphainfluenzavirus influenzae</taxon>
        <taxon>Influenza A virus</taxon>
    </lineage>
</organism>
<protein>
    <recommendedName>
        <fullName evidence="2">Polymerase acidic protein</fullName>
        <ecNumber evidence="2">3.1.-.-</ecNumber>
    </recommendedName>
    <alternativeName>
        <fullName evidence="2">RNA-directed RNA polymerase subunit P2</fullName>
    </alternativeName>
</protein>
<dbReference type="EC" id="3.1.-.-" evidence="2"/>
<dbReference type="EMBL" id="AF046087">
    <property type="protein sequence ID" value="AAC32087.1"/>
    <property type="molecule type" value="Genomic_RNA"/>
</dbReference>
<dbReference type="SMR" id="O89750"/>
<dbReference type="MEROPS" id="S62.001"/>
<dbReference type="GO" id="GO:0030430">
    <property type="term" value="C:host cell cytoplasm"/>
    <property type="evidence" value="ECO:0007669"/>
    <property type="project" value="UniProtKB-SubCell"/>
</dbReference>
<dbReference type="GO" id="GO:0042025">
    <property type="term" value="C:host cell nucleus"/>
    <property type="evidence" value="ECO:0007669"/>
    <property type="project" value="UniProtKB-SubCell"/>
</dbReference>
<dbReference type="GO" id="GO:0004519">
    <property type="term" value="F:endonuclease activity"/>
    <property type="evidence" value="ECO:0007669"/>
    <property type="project" value="UniProtKB-KW"/>
</dbReference>
<dbReference type="GO" id="GO:0046872">
    <property type="term" value="F:metal ion binding"/>
    <property type="evidence" value="ECO:0007669"/>
    <property type="project" value="UniProtKB-KW"/>
</dbReference>
<dbReference type="GO" id="GO:0003723">
    <property type="term" value="F:RNA binding"/>
    <property type="evidence" value="ECO:0007669"/>
    <property type="project" value="UniProtKB-UniRule"/>
</dbReference>
<dbReference type="GO" id="GO:0075526">
    <property type="term" value="P:cap snatching"/>
    <property type="evidence" value="ECO:0007669"/>
    <property type="project" value="UniProtKB-UniRule"/>
</dbReference>
<dbReference type="GO" id="GO:0006351">
    <property type="term" value="P:DNA-templated transcription"/>
    <property type="evidence" value="ECO:0007669"/>
    <property type="project" value="UniProtKB-UniRule"/>
</dbReference>
<dbReference type="GO" id="GO:0039657">
    <property type="term" value="P:symbiont-mediated suppression of host gene expression"/>
    <property type="evidence" value="ECO:0007669"/>
    <property type="project" value="UniProtKB-KW"/>
</dbReference>
<dbReference type="GO" id="GO:0039523">
    <property type="term" value="P:symbiont-mediated suppression of host mRNA transcription via inhibition of RNA polymerase II activity"/>
    <property type="evidence" value="ECO:0007669"/>
    <property type="project" value="UniProtKB-UniRule"/>
</dbReference>
<dbReference type="GO" id="GO:0039694">
    <property type="term" value="P:viral RNA genome replication"/>
    <property type="evidence" value="ECO:0007669"/>
    <property type="project" value="InterPro"/>
</dbReference>
<dbReference type="GO" id="GO:0075523">
    <property type="term" value="P:viral translational frameshifting"/>
    <property type="evidence" value="ECO:0007669"/>
    <property type="project" value="UniProtKB-KW"/>
</dbReference>
<dbReference type="FunFam" id="3.40.91.90:FF:000001">
    <property type="entry name" value="Polymerase acidic protein"/>
    <property type="match status" value="1"/>
</dbReference>
<dbReference type="Gene3D" id="3.40.91.90">
    <property type="entry name" value="Influenza RNA-dependent RNA polymerase subunit PA, endonuclease domain"/>
    <property type="match status" value="1"/>
</dbReference>
<dbReference type="HAMAP" id="MF_04063">
    <property type="entry name" value="INFV_PA"/>
    <property type="match status" value="1"/>
</dbReference>
<dbReference type="InterPro" id="IPR037534">
    <property type="entry name" value="INFV_PA"/>
</dbReference>
<dbReference type="InterPro" id="IPR001009">
    <property type="entry name" value="PA/PA-X"/>
</dbReference>
<dbReference type="InterPro" id="IPR038372">
    <property type="entry name" value="PA/PA-X_sf"/>
</dbReference>
<dbReference type="Pfam" id="PF00603">
    <property type="entry name" value="Flu_PA"/>
    <property type="match status" value="1"/>
</dbReference>
<proteinExistence type="inferred from homology"/>
<accession>O89750</accession>
<keyword id="KW-1157">Cap snatching</keyword>
<keyword id="KW-0255">Endonuclease</keyword>
<keyword id="KW-1262">Eukaryotic host gene expression shutoff by virus</keyword>
<keyword id="KW-1191">Eukaryotic host transcription shutoff by virus</keyword>
<keyword id="KW-1035">Host cytoplasm</keyword>
<keyword id="KW-1190">Host gene expression shutoff by virus</keyword>
<keyword id="KW-1048">Host nucleus</keyword>
<keyword id="KW-0945">Host-virus interaction</keyword>
<keyword id="KW-0378">Hydrolase</keyword>
<keyword id="KW-1104">Inhibition of host RNA polymerase II by virus</keyword>
<keyword id="KW-0464">Manganese</keyword>
<keyword id="KW-0479">Metal-binding</keyword>
<keyword id="KW-0540">Nuclease</keyword>
<keyword id="KW-0597">Phosphoprotein</keyword>
<keyword id="KW-0688">Ribosomal frameshifting</keyword>
<sequence>MEDFVRQCFNPMIVELAEKTMKEYGEDPKIETNKFAAICTHLEVCFMYSDFHFIDERGESIIVESGDPNALLKHRFEIIEGRDRAMAWTVVNSICNTTGVDKPKFLPDLYDYKENRFTEIGVTRREIHIYYLEKANKIKSEKTHIHIFSFTGEEMATKADYTLDEESRARIKTRLFTIRQEMASRGLWDSFRQSERGEETIEERFEITGTMRRLADQSLPPNFSSLENFRAYVDGFKPNGCIEGKLSQMSKEVNARIEPFLKTTPRPLRLPDGPPCSQRSKFLLMDALKLSIEDPSHEGEGIPLYDAIKCMKTFFGWREPNIIKPHEKGINPNYLMAWKQVLAELQDIENEDKIPKTKNMKKTSQLMWALGENMAPEKVDFEDCKDIDDLKQYHSDEPELRSLASWIQSEFNKACELTDSSWIELDEIGEDVAPIEHIASMRRNYFTAEVSHCRATEYIMKGVYINTALLNASCAAMDDFQLIPMISKCRTKEGRRKTNLYGFIIKGRSHLRNDTDVVNFVSMEFSLTDPRLEPHKWEKYCVLEIGEMLLRTAIGQVSRPMFLYVRTNGTSKIKMKWGMEMRRCLLQSLQQIESMIEAESSIKEKDMTKEFFENRSETWPIGESPKGVEEGSIGKVCRTLLAKSVFNSLYSSPQLEGFSAESRKLLLIVQALRDNLEPGTFDLEGLYGAIEECLINDPWVLLNASWFNSFLTHALR</sequence>